<comment type="function">
    <text evidence="1">In elementary bodies (EBs, the infectious stage, which is able to survive outside the host cell) provides the structural integrity of the outer envelope through disulfide cross-links with the small cysteine-rich protein and the large cysteine-rich periplasmic protein. It has been described in publications as the Sarkosyl-insoluble COMC (Chlamydia outer membrane complex), and serves as the functional equivalent of peptidoglycan (By similarity).</text>
</comment>
<comment type="function">
    <text evidence="1">Permits diffusion of specific solutes through the outer membrane.</text>
</comment>
<comment type="subunit">
    <text>Part of a disulfide cross-linked outer membrane complex (COMC) composed of the major outer membrane porin (MOMP), the small cysteine-rich protein (OmcA) and the large cysteine-rich periplasmic protein (OmcB).</text>
</comment>
<comment type="subcellular location">
    <subcellularLocation>
        <location evidence="1">Cell outer membrane</location>
        <topology evidence="1">Multi-pass membrane protein</topology>
    </subcellularLocation>
</comment>
<comment type="developmental stage">
    <text>It is present but some of the disulfide bonds are reduced in reticulate bodies (RBs).</text>
</comment>
<comment type="similarity">
    <text evidence="2">Belongs to the chlamydial porin (CP) (TC 1.B.2) family.</text>
</comment>
<proteinExistence type="evidence at transcript level"/>
<sequence length="397" mass="42886">MKKLLKSVLVFAALSSASSLQALPVGNPAEPSLMIDGILWEGFGGDPCDPCTTWCDAISMRVGYYGDFVFDRVLKTDVNKEFQMGAEPTTSDTAGLSNDPTTNVARPNPAYGKHMQDAEMFTNAAYMALNIWDRFDVFCTLGATTGYLKGNSASFNLVGLFGTKTQSTNFNTAKLVPNTALNQAVVELYTDTTFAWSVGARAALWECGCATLGASFQYAQSKPKVEELNVLCDASEFTINKPKGYVGAEFPLDITAGTEAATGTKDASIDYHEWQASLALSYRLNMFTPYIGVKWSRVSFDADTIRIAQPKLAEAVLDVTTLNPTIAGKGSVVASGSENELADTMQIVSLQLNKMKSRKSCGIAVGTTIVDADKYAVTVETRLIDERAAHVNAQFRF</sequence>
<dbReference type="EMBL" id="X55700">
    <property type="protein sequence ID" value="CAA39226.1"/>
    <property type="molecule type" value="Genomic_DNA"/>
</dbReference>
<dbReference type="PIR" id="JE0413">
    <property type="entry name" value="JE0413"/>
</dbReference>
<dbReference type="GO" id="GO:0009279">
    <property type="term" value="C:cell outer membrane"/>
    <property type="evidence" value="ECO:0007669"/>
    <property type="project" value="UniProtKB-SubCell"/>
</dbReference>
<dbReference type="GO" id="GO:0046930">
    <property type="term" value="C:pore complex"/>
    <property type="evidence" value="ECO:0007669"/>
    <property type="project" value="UniProtKB-KW"/>
</dbReference>
<dbReference type="GO" id="GO:0015288">
    <property type="term" value="F:porin activity"/>
    <property type="evidence" value="ECO:0007669"/>
    <property type="project" value="UniProtKB-KW"/>
</dbReference>
<dbReference type="GO" id="GO:0005198">
    <property type="term" value="F:structural molecule activity"/>
    <property type="evidence" value="ECO:0007669"/>
    <property type="project" value="InterPro"/>
</dbReference>
<dbReference type="GO" id="GO:0006811">
    <property type="term" value="P:monoatomic ion transport"/>
    <property type="evidence" value="ECO:0007669"/>
    <property type="project" value="UniProtKB-KW"/>
</dbReference>
<dbReference type="GO" id="GO:0008360">
    <property type="term" value="P:regulation of cell shape"/>
    <property type="evidence" value="ECO:0007669"/>
    <property type="project" value="UniProtKB-KW"/>
</dbReference>
<dbReference type="InterPro" id="IPR000604">
    <property type="entry name" value="Major_OMP_Chlamydia"/>
</dbReference>
<dbReference type="Pfam" id="PF01308">
    <property type="entry name" value="Chlam_OMP"/>
    <property type="match status" value="1"/>
</dbReference>
<dbReference type="PRINTS" id="PR01334">
    <property type="entry name" value="CHLAMIDIAOMP"/>
</dbReference>
<name>MOMPN_CHLTH</name>
<evidence type="ECO:0000250" key="1"/>
<evidence type="ECO:0000305" key="2"/>
<feature type="signal peptide" evidence="1">
    <location>
        <begin position="1"/>
        <end position="22"/>
    </location>
</feature>
<feature type="chain" id="PRO_0000020153" description="Major outer membrane porin, serovar L3">
    <location>
        <begin position="23"/>
        <end position="397"/>
    </location>
</feature>
<keyword id="KW-0998">Cell outer membrane</keyword>
<keyword id="KW-0133">Cell shape</keyword>
<keyword id="KW-1015">Disulfide bond</keyword>
<keyword id="KW-0406">Ion transport</keyword>
<keyword id="KW-0472">Membrane</keyword>
<keyword id="KW-0626">Porin</keyword>
<keyword id="KW-0732">Signal</keyword>
<keyword id="KW-0812">Transmembrane</keyword>
<keyword id="KW-1134">Transmembrane beta strand</keyword>
<keyword id="KW-0813">Transport</keyword>
<reference key="1">
    <citation type="journal article" date="1991" name="Gene">
        <title>Nucleotide sequence of DNA encoding the major outer membrane protein of Chlamydia trachomatis serovar L3.</title>
        <authorList>
            <person name="Fielder T.J."/>
            <person name="Peterson E.M."/>
            <person name="de la Maza L.M."/>
        </authorList>
    </citation>
    <scope>NUCLEOTIDE SEQUENCE [GENOMIC DNA]</scope>
    <source>
        <strain>L3/404</strain>
    </source>
</reference>
<reference key="2">
    <citation type="journal article" date="1990" name="Gene">
        <title>Expression of the Chlamydia trachomatis major outer membrane protein-encoding gene in Escherichia coli: role of the 3' end in mRNA stability.</title>
        <authorList>
            <person name="Kaul R."/>
            <person name="Duncan M.J."/>
            <person name="Guest J."/>
            <person name="Wenman W.M."/>
        </authorList>
    </citation>
    <scope>NUCLEOTIDE SEQUENCE [GENOMIC DNA] OF 81-136</scope>
</reference>
<gene>
    <name type="primary">ompA</name>
    <name type="synonym">omp1L3</name>
</gene>
<accession>P23114</accession>
<protein>
    <recommendedName>
        <fullName>Major outer membrane porin, serovar L3</fullName>
        <shortName>MOMP</shortName>
    </recommendedName>
</protein>
<organism>
    <name type="scientific">Chlamydia trachomatis</name>
    <dbReference type="NCBI Taxonomy" id="813"/>
    <lineage>
        <taxon>Bacteria</taxon>
        <taxon>Pseudomonadati</taxon>
        <taxon>Chlamydiota</taxon>
        <taxon>Chlamydiia</taxon>
        <taxon>Chlamydiales</taxon>
        <taxon>Chlamydiaceae</taxon>
        <taxon>Chlamydia/Chlamydophila group</taxon>
        <taxon>Chlamydia</taxon>
    </lineage>
</organism>